<organismHost>
    <name type="scientific">Acanthamoeba polyphaga</name>
    <name type="common">Amoeba</name>
    <dbReference type="NCBI Taxonomy" id="5757"/>
</organismHost>
<organism>
    <name type="scientific">Acanthamoeba polyphaga mimivirus</name>
    <name type="common">APMV</name>
    <dbReference type="NCBI Taxonomy" id="212035"/>
    <lineage>
        <taxon>Viruses</taxon>
        <taxon>Varidnaviria</taxon>
        <taxon>Bamfordvirae</taxon>
        <taxon>Nucleocytoviricota</taxon>
        <taxon>Megaviricetes</taxon>
        <taxon>Imitervirales</taxon>
        <taxon>Mimiviridae</taxon>
        <taxon>Megamimivirinae</taxon>
        <taxon>Mimivirus</taxon>
        <taxon>Mimivirus bradfordmassiliense</taxon>
    </lineage>
</organism>
<name>YL796_MIMIV</name>
<reference key="1">
    <citation type="journal article" date="2004" name="Science">
        <title>The 1.2-megabase genome sequence of Mimivirus.</title>
        <authorList>
            <person name="Raoult D."/>
            <person name="Audic S."/>
            <person name="Robert C."/>
            <person name="Abergel C."/>
            <person name="Renesto P."/>
            <person name="Ogata H."/>
            <person name="La Scola B."/>
            <person name="Susan M."/>
            <person name="Claverie J.-M."/>
        </authorList>
    </citation>
    <scope>NUCLEOTIDE SEQUENCE [LARGE SCALE GENOMIC DNA]</scope>
    <source>
        <strain>Rowbotham-Bradford</strain>
    </source>
</reference>
<accession>Q5UQ39</accession>
<gene>
    <name type="ordered locus">MIMI_L796</name>
</gene>
<dbReference type="EMBL" id="AY653733">
    <property type="protein sequence ID" value="AAV51056.1"/>
    <property type="molecule type" value="Genomic_DNA"/>
</dbReference>
<dbReference type="KEGG" id="vg:9925458"/>
<dbReference type="Proteomes" id="UP000001134">
    <property type="component" value="Genome"/>
</dbReference>
<protein>
    <recommendedName>
        <fullName>Uncharacterized protein L796</fullName>
    </recommendedName>
</protein>
<feature type="chain" id="PRO_0000243978" description="Uncharacterized protein L796">
    <location>
        <begin position="1"/>
        <end position="142"/>
    </location>
</feature>
<sequence>MSTPVSEKINNKMRFPFEGIYHTIFPTKFYTRVYCQHNEYQNSISAIAELRVPIGSTIAKYDSDHGMIRADKVIVEKITTVDNDIVSDDFYCGKFNKGAVLNYKDSFKTKHNYSSSGIHGSLYKEKAHYSYDGRLPSIGSSW</sequence>
<keyword id="KW-1185">Reference proteome</keyword>
<proteinExistence type="predicted"/>